<reference key="1">
    <citation type="journal article" date="2005" name="J. Bacteriol.">
        <title>Insights on evolution of virulence and resistance from the complete genome analysis of an early methicillin-resistant Staphylococcus aureus strain and a biofilm-producing methicillin-resistant Staphylococcus epidermidis strain.</title>
        <authorList>
            <person name="Gill S.R."/>
            <person name="Fouts D.E."/>
            <person name="Archer G.L."/>
            <person name="Mongodin E.F."/>
            <person name="DeBoy R.T."/>
            <person name="Ravel J."/>
            <person name="Paulsen I.T."/>
            <person name="Kolonay J.F."/>
            <person name="Brinkac L.M."/>
            <person name="Beanan M.J."/>
            <person name="Dodson R.J."/>
            <person name="Daugherty S.C."/>
            <person name="Madupu R."/>
            <person name="Angiuoli S.V."/>
            <person name="Durkin A.S."/>
            <person name="Haft D.H."/>
            <person name="Vamathevan J.J."/>
            <person name="Khouri H."/>
            <person name="Utterback T.R."/>
            <person name="Lee C."/>
            <person name="Dimitrov G."/>
            <person name="Jiang L."/>
            <person name="Qin H."/>
            <person name="Weidman J."/>
            <person name="Tran K."/>
            <person name="Kang K.H."/>
            <person name="Hance I.R."/>
            <person name="Nelson K.E."/>
            <person name="Fraser C.M."/>
        </authorList>
    </citation>
    <scope>NUCLEOTIDE SEQUENCE [LARGE SCALE GENOMIC DNA]</scope>
    <source>
        <strain>ATCC 35984 / DSM 28319 / BCRC 17069 / CCUG 31568 / BM 3577 / RP62A</strain>
    </source>
</reference>
<comment type="function">
    <text evidence="1">Channel that opens in response to stretch forces in the membrane lipid bilayer. May participate in the regulation of osmotic pressure changes within the cell.</text>
</comment>
<comment type="subunit">
    <text evidence="1">Homopentamer.</text>
</comment>
<comment type="subcellular location">
    <subcellularLocation>
        <location evidence="1">Cell membrane</location>
        <topology evidence="1">Multi-pass membrane protein</topology>
    </subcellularLocation>
</comment>
<comment type="similarity">
    <text evidence="1">Belongs to the MscL family.</text>
</comment>
<evidence type="ECO:0000255" key="1">
    <source>
        <dbReference type="HAMAP-Rule" id="MF_00115"/>
    </source>
</evidence>
<name>MSCL_STAEQ</name>
<dbReference type="EMBL" id="CP000029">
    <property type="protein sequence ID" value="AAW54294.1"/>
    <property type="molecule type" value="Genomic_DNA"/>
</dbReference>
<dbReference type="RefSeq" id="WP_001831237.1">
    <property type="nucleotide sequence ID" value="NC_002976.3"/>
</dbReference>
<dbReference type="SMR" id="Q5HPJ2"/>
<dbReference type="STRING" id="176279.SERP0919"/>
<dbReference type="GeneID" id="50018843"/>
<dbReference type="KEGG" id="ser:SERP0919"/>
<dbReference type="eggNOG" id="COG1970">
    <property type="taxonomic scope" value="Bacteria"/>
</dbReference>
<dbReference type="HOGENOM" id="CLU_095787_0_0_9"/>
<dbReference type="Proteomes" id="UP000000531">
    <property type="component" value="Chromosome"/>
</dbReference>
<dbReference type="GO" id="GO:0005886">
    <property type="term" value="C:plasma membrane"/>
    <property type="evidence" value="ECO:0007669"/>
    <property type="project" value="UniProtKB-SubCell"/>
</dbReference>
<dbReference type="GO" id="GO:0008381">
    <property type="term" value="F:mechanosensitive monoatomic ion channel activity"/>
    <property type="evidence" value="ECO:0007669"/>
    <property type="project" value="UniProtKB-UniRule"/>
</dbReference>
<dbReference type="Gene3D" id="1.10.1200.120">
    <property type="entry name" value="Large-conductance mechanosensitive channel, MscL, domain 1"/>
    <property type="match status" value="1"/>
</dbReference>
<dbReference type="HAMAP" id="MF_00115">
    <property type="entry name" value="MscL"/>
    <property type="match status" value="1"/>
</dbReference>
<dbReference type="InterPro" id="IPR019823">
    <property type="entry name" value="Mechanosensitive_channel_CS"/>
</dbReference>
<dbReference type="InterPro" id="IPR001185">
    <property type="entry name" value="MS_channel"/>
</dbReference>
<dbReference type="InterPro" id="IPR037673">
    <property type="entry name" value="MSC/AndL"/>
</dbReference>
<dbReference type="InterPro" id="IPR036019">
    <property type="entry name" value="MscL_channel"/>
</dbReference>
<dbReference type="NCBIfam" id="TIGR00220">
    <property type="entry name" value="mscL"/>
    <property type="match status" value="1"/>
</dbReference>
<dbReference type="NCBIfam" id="NF010559">
    <property type="entry name" value="PRK13954.1"/>
    <property type="match status" value="1"/>
</dbReference>
<dbReference type="PANTHER" id="PTHR30266:SF2">
    <property type="entry name" value="LARGE-CONDUCTANCE MECHANOSENSITIVE CHANNEL"/>
    <property type="match status" value="1"/>
</dbReference>
<dbReference type="PANTHER" id="PTHR30266">
    <property type="entry name" value="MECHANOSENSITIVE CHANNEL MSCL"/>
    <property type="match status" value="1"/>
</dbReference>
<dbReference type="Pfam" id="PF01741">
    <property type="entry name" value="MscL"/>
    <property type="match status" value="1"/>
</dbReference>
<dbReference type="PRINTS" id="PR01264">
    <property type="entry name" value="MECHCHANNEL"/>
</dbReference>
<dbReference type="SUPFAM" id="SSF81330">
    <property type="entry name" value="Gated mechanosensitive channel"/>
    <property type="match status" value="1"/>
</dbReference>
<dbReference type="PROSITE" id="PS01327">
    <property type="entry name" value="MSCL"/>
    <property type="match status" value="1"/>
</dbReference>
<organism>
    <name type="scientific">Staphylococcus epidermidis (strain ATCC 35984 / DSM 28319 / BCRC 17069 / CCUG 31568 / BM 3577 / RP62A)</name>
    <dbReference type="NCBI Taxonomy" id="176279"/>
    <lineage>
        <taxon>Bacteria</taxon>
        <taxon>Bacillati</taxon>
        <taxon>Bacillota</taxon>
        <taxon>Bacilli</taxon>
        <taxon>Bacillales</taxon>
        <taxon>Staphylococcaceae</taxon>
        <taxon>Staphylococcus</taxon>
    </lineage>
</organism>
<protein>
    <recommendedName>
        <fullName evidence="1">Large-conductance mechanosensitive channel</fullName>
    </recommendedName>
</protein>
<accession>Q5HPJ2</accession>
<feature type="chain" id="PRO_0000192468" description="Large-conductance mechanosensitive channel">
    <location>
        <begin position="1"/>
        <end position="116"/>
    </location>
</feature>
<feature type="transmembrane region" description="Helical" evidence="1">
    <location>
        <begin position="7"/>
        <end position="27"/>
    </location>
</feature>
<feature type="transmembrane region" description="Helical" evidence="1">
    <location>
        <begin position="64"/>
        <end position="84"/>
    </location>
</feature>
<sequence length="116" mass="13254">MLKEFKEFALKGNVLDLAIAVVMGAAFNKIVTSLVQYIIMPLIGKLFGSVNFAEDWSFWGIKYGLFIQSIIDFIIIAFALFIFVKIANTVMKKEEKEEEVEENTVLLTEIRDLLKK</sequence>
<gene>
    <name evidence="1" type="primary">mscL</name>
    <name type="ordered locus">SERP0919</name>
</gene>
<keyword id="KW-1003">Cell membrane</keyword>
<keyword id="KW-0407">Ion channel</keyword>
<keyword id="KW-0406">Ion transport</keyword>
<keyword id="KW-0472">Membrane</keyword>
<keyword id="KW-1185">Reference proteome</keyword>
<keyword id="KW-0812">Transmembrane</keyword>
<keyword id="KW-1133">Transmembrane helix</keyword>
<keyword id="KW-0813">Transport</keyword>
<proteinExistence type="inferred from homology"/>